<evidence type="ECO:0000255" key="1">
    <source>
        <dbReference type="HAMAP-Rule" id="MF_00102"/>
    </source>
</evidence>
<evidence type="ECO:0000305" key="2"/>
<sequence>MRRIAVMGAAGRMGKTLIEAVQQTPGAGLTAAIDRPDSSLVGADAGELAALGRIGVLLSDDLAKVADEFDVLIDFTHPSVTLKNLAFCRKHGKAMIIGTTGFTVEEKQLLAEAGKDIPIVFAANFSVGVNLSLKLLDMAARVLGDDVDIEIIEAHHRHKVDAPSGTALRMGEVVANALGRDLQEVAVYGREGQTGARDRKTIGFATVRAGDVVGDHTVLFAAEGERLEITHKASSRMTFAKGAVRAALWLDGREPGLYDMQDVLELR</sequence>
<proteinExistence type="inferred from homology"/>
<protein>
    <recommendedName>
        <fullName evidence="1">4-hydroxy-tetrahydrodipicolinate reductase</fullName>
        <shortName evidence="1">HTPA reductase</shortName>
        <ecNumber evidence="1">1.17.1.8</ecNumber>
    </recommendedName>
</protein>
<gene>
    <name evidence="1" type="primary">dapB</name>
    <name type="ordered locus">PP_4725</name>
</gene>
<comment type="function">
    <text evidence="1">Catalyzes the conversion of 4-hydroxy-tetrahydrodipicolinate (HTPA) to tetrahydrodipicolinate.</text>
</comment>
<comment type="catalytic activity">
    <reaction evidence="1">
        <text>(S)-2,3,4,5-tetrahydrodipicolinate + NAD(+) + H2O = (2S,4S)-4-hydroxy-2,3,4,5-tetrahydrodipicolinate + NADH + H(+)</text>
        <dbReference type="Rhea" id="RHEA:35323"/>
        <dbReference type="ChEBI" id="CHEBI:15377"/>
        <dbReference type="ChEBI" id="CHEBI:15378"/>
        <dbReference type="ChEBI" id="CHEBI:16845"/>
        <dbReference type="ChEBI" id="CHEBI:57540"/>
        <dbReference type="ChEBI" id="CHEBI:57945"/>
        <dbReference type="ChEBI" id="CHEBI:67139"/>
        <dbReference type="EC" id="1.17.1.8"/>
    </reaction>
</comment>
<comment type="catalytic activity">
    <reaction evidence="1">
        <text>(S)-2,3,4,5-tetrahydrodipicolinate + NADP(+) + H2O = (2S,4S)-4-hydroxy-2,3,4,5-tetrahydrodipicolinate + NADPH + H(+)</text>
        <dbReference type="Rhea" id="RHEA:35331"/>
        <dbReference type="ChEBI" id="CHEBI:15377"/>
        <dbReference type="ChEBI" id="CHEBI:15378"/>
        <dbReference type="ChEBI" id="CHEBI:16845"/>
        <dbReference type="ChEBI" id="CHEBI:57783"/>
        <dbReference type="ChEBI" id="CHEBI:58349"/>
        <dbReference type="ChEBI" id="CHEBI:67139"/>
        <dbReference type="EC" id="1.17.1.8"/>
    </reaction>
</comment>
<comment type="pathway">
    <text evidence="1">Amino-acid biosynthesis; L-lysine biosynthesis via DAP pathway; (S)-tetrahydrodipicolinate from L-aspartate: step 4/4.</text>
</comment>
<comment type="subcellular location">
    <subcellularLocation>
        <location evidence="1">Cytoplasm</location>
    </subcellularLocation>
</comment>
<comment type="similarity">
    <text evidence="1">Belongs to the DapB family.</text>
</comment>
<comment type="caution">
    <text evidence="2">Was originally thought to be a dihydrodipicolinate reductase (DHDPR), catalyzing the conversion of dihydrodipicolinate to tetrahydrodipicolinate. However, it was shown in E.coli that the substrate of the enzymatic reaction is not dihydrodipicolinate (DHDP) but in fact (2S,4S)-4-hydroxy-2,3,4,5-tetrahydrodipicolinic acid (HTPA), the product released by the DapA-catalyzed reaction.</text>
</comment>
<organism>
    <name type="scientific">Pseudomonas putida (strain ATCC 47054 / DSM 6125 / CFBP 8728 / NCIMB 11950 / KT2440)</name>
    <dbReference type="NCBI Taxonomy" id="160488"/>
    <lineage>
        <taxon>Bacteria</taxon>
        <taxon>Pseudomonadati</taxon>
        <taxon>Pseudomonadota</taxon>
        <taxon>Gammaproteobacteria</taxon>
        <taxon>Pseudomonadales</taxon>
        <taxon>Pseudomonadaceae</taxon>
        <taxon>Pseudomonas</taxon>
    </lineage>
</organism>
<keyword id="KW-0028">Amino-acid biosynthesis</keyword>
<keyword id="KW-0963">Cytoplasm</keyword>
<keyword id="KW-0220">Diaminopimelate biosynthesis</keyword>
<keyword id="KW-0457">Lysine biosynthesis</keyword>
<keyword id="KW-0520">NAD</keyword>
<keyword id="KW-0521">NADP</keyword>
<keyword id="KW-0560">Oxidoreductase</keyword>
<keyword id="KW-1185">Reference proteome</keyword>
<accession>Q88DU4</accession>
<reference key="1">
    <citation type="journal article" date="2002" name="Environ. Microbiol.">
        <title>Complete genome sequence and comparative analysis of the metabolically versatile Pseudomonas putida KT2440.</title>
        <authorList>
            <person name="Nelson K.E."/>
            <person name="Weinel C."/>
            <person name="Paulsen I.T."/>
            <person name="Dodson R.J."/>
            <person name="Hilbert H."/>
            <person name="Martins dos Santos V.A.P."/>
            <person name="Fouts D.E."/>
            <person name="Gill S.R."/>
            <person name="Pop M."/>
            <person name="Holmes M."/>
            <person name="Brinkac L.M."/>
            <person name="Beanan M.J."/>
            <person name="DeBoy R.T."/>
            <person name="Daugherty S.C."/>
            <person name="Kolonay J.F."/>
            <person name="Madupu R."/>
            <person name="Nelson W.C."/>
            <person name="White O."/>
            <person name="Peterson J.D."/>
            <person name="Khouri H.M."/>
            <person name="Hance I."/>
            <person name="Chris Lee P."/>
            <person name="Holtzapple E.K."/>
            <person name="Scanlan D."/>
            <person name="Tran K."/>
            <person name="Moazzez A."/>
            <person name="Utterback T.R."/>
            <person name="Rizzo M."/>
            <person name="Lee K."/>
            <person name="Kosack D."/>
            <person name="Moestl D."/>
            <person name="Wedler H."/>
            <person name="Lauber J."/>
            <person name="Stjepandic D."/>
            <person name="Hoheisel J."/>
            <person name="Straetz M."/>
            <person name="Heim S."/>
            <person name="Kiewitz C."/>
            <person name="Eisen J.A."/>
            <person name="Timmis K.N."/>
            <person name="Duesterhoeft A."/>
            <person name="Tuemmler B."/>
            <person name="Fraser C.M."/>
        </authorList>
    </citation>
    <scope>NUCLEOTIDE SEQUENCE [LARGE SCALE GENOMIC DNA]</scope>
    <source>
        <strain>ATCC 47054 / DSM 6125 / CFBP 8728 / NCIMB 11950 / KT2440</strain>
    </source>
</reference>
<name>DAPB_PSEPK</name>
<dbReference type="EC" id="1.17.1.8" evidence="1"/>
<dbReference type="EMBL" id="AE015451">
    <property type="protein sequence ID" value="AAN70297.1"/>
    <property type="molecule type" value="Genomic_DNA"/>
</dbReference>
<dbReference type="RefSeq" id="NP_746833.1">
    <property type="nucleotide sequence ID" value="NC_002947.4"/>
</dbReference>
<dbReference type="RefSeq" id="WP_003249933.1">
    <property type="nucleotide sequence ID" value="NZ_CP169744.1"/>
</dbReference>
<dbReference type="SMR" id="Q88DU4"/>
<dbReference type="STRING" id="160488.PP_4725"/>
<dbReference type="PaxDb" id="160488-PP_4725"/>
<dbReference type="GeneID" id="83682442"/>
<dbReference type="KEGG" id="ppu:PP_4725"/>
<dbReference type="PATRIC" id="fig|160488.4.peg.5036"/>
<dbReference type="eggNOG" id="COG0289">
    <property type="taxonomic scope" value="Bacteria"/>
</dbReference>
<dbReference type="HOGENOM" id="CLU_047479_2_1_6"/>
<dbReference type="OrthoDB" id="9790352at2"/>
<dbReference type="PhylomeDB" id="Q88DU4"/>
<dbReference type="BioCyc" id="PPUT160488:G1G01-5053-MONOMER"/>
<dbReference type="UniPathway" id="UPA00034">
    <property type="reaction ID" value="UER00018"/>
</dbReference>
<dbReference type="Proteomes" id="UP000000556">
    <property type="component" value="Chromosome"/>
</dbReference>
<dbReference type="GO" id="GO:0005829">
    <property type="term" value="C:cytosol"/>
    <property type="evidence" value="ECO:0007669"/>
    <property type="project" value="TreeGrafter"/>
</dbReference>
<dbReference type="GO" id="GO:0008839">
    <property type="term" value="F:4-hydroxy-tetrahydrodipicolinate reductase"/>
    <property type="evidence" value="ECO:0007669"/>
    <property type="project" value="UniProtKB-EC"/>
</dbReference>
<dbReference type="GO" id="GO:0051287">
    <property type="term" value="F:NAD binding"/>
    <property type="evidence" value="ECO:0007669"/>
    <property type="project" value="UniProtKB-UniRule"/>
</dbReference>
<dbReference type="GO" id="GO:0050661">
    <property type="term" value="F:NADP binding"/>
    <property type="evidence" value="ECO:0007669"/>
    <property type="project" value="UniProtKB-UniRule"/>
</dbReference>
<dbReference type="GO" id="GO:0016726">
    <property type="term" value="F:oxidoreductase activity, acting on CH or CH2 groups, NAD or NADP as acceptor"/>
    <property type="evidence" value="ECO:0007669"/>
    <property type="project" value="UniProtKB-UniRule"/>
</dbReference>
<dbReference type="GO" id="GO:0019877">
    <property type="term" value="P:diaminopimelate biosynthetic process"/>
    <property type="evidence" value="ECO:0007669"/>
    <property type="project" value="UniProtKB-UniRule"/>
</dbReference>
<dbReference type="GO" id="GO:0009089">
    <property type="term" value="P:lysine biosynthetic process via diaminopimelate"/>
    <property type="evidence" value="ECO:0007669"/>
    <property type="project" value="UniProtKB-UniRule"/>
</dbReference>
<dbReference type="CDD" id="cd02274">
    <property type="entry name" value="DHDPR_N"/>
    <property type="match status" value="1"/>
</dbReference>
<dbReference type="FunFam" id="3.30.360.10:FF:000004">
    <property type="entry name" value="4-hydroxy-tetrahydrodipicolinate reductase"/>
    <property type="match status" value="1"/>
</dbReference>
<dbReference type="FunFam" id="3.40.50.720:FF:000048">
    <property type="entry name" value="4-hydroxy-tetrahydrodipicolinate reductase"/>
    <property type="match status" value="1"/>
</dbReference>
<dbReference type="Gene3D" id="3.30.360.10">
    <property type="entry name" value="Dihydrodipicolinate Reductase, domain 2"/>
    <property type="match status" value="1"/>
</dbReference>
<dbReference type="Gene3D" id="3.40.50.720">
    <property type="entry name" value="NAD(P)-binding Rossmann-like Domain"/>
    <property type="match status" value="1"/>
</dbReference>
<dbReference type="HAMAP" id="MF_00102">
    <property type="entry name" value="DapB"/>
    <property type="match status" value="1"/>
</dbReference>
<dbReference type="InterPro" id="IPR022663">
    <property type="entry name" value="DapB_C"/>
</dbReference>
<dbReference type="InterPro" id="IPR000846">
    <property type="entry name" value="DapB_N"/>
</dbReference>
<dbReference type="InterPro" id="IPR022664">
    <property type="entry name" value="DapB_N_CS"/>
</dbReference>
<dbReference type="InterPro" id="IPR023940">
    <property type="entry name" value="DHDPR_bac"/>
</dbReference>
<dbReference type="InterPro" id="IPR036291">
    <property type="entry name" value="NAD(P)-bd_dom_sf"/>
</dbReference>
<dbReference type="NCBIfam" id="TIGR00036">
    <property type="entry name" value="dapB"/>
    <property type="match status" value="1"/>
</dbReference>
<dbReference type="PANTHER" id="PTHR20836:SF0">
    <property type="entry name" value="4-HYDROXY-TETRAHYDRODIPICOLINATE REDUCTASE 1, CHLOROPLASTIC-RELATED"/>
    <property type="match status" value="1"/>
</dbReference>
<dbReference type="PANTHER" id="PTHR20836">
    <property type="entry name" value="DIHYDRODIPICOLINATE REDUCTASE"/>
    <property type="match status" value="1"/>
</dbReference>
<dbReference type="Pfam" id="PF05173">
    <property type="entry name" value="DapB_C"/>
    <property type="match status" value="1"/>
</dbReference>
<dbReference type="Pfam" id="PF01113">
    <property type="entry name" value="DapB_N"/>
    <property type="match status" value="1"/>
</dbReference>
<dbReference type="PIRSF" id="PIRSF000161">
    <property type="entry name" value="DHPR"/>
    <property type="match status" value="1"/>
</dbReference>
<dbReference type="SUPFAM" id="SSF55347">
    <property type="entry name" value="Glyceraldehyde-3-phosphate dehydrogenase-like, C-terminal domain"/>
    <property type="match status" value="1"/>
</dbReference>
<dbReference type="SUPFAM" id="SSF51735">
    <property type="entry name" value="NAD(P)-binding Rossmann-fold domains"/>
    <property type="match status" value="1"/>
</dbReference>
<dbReference type="PROSITE" id="PS01298">
    <property type="entry name" value="DAPB"/>
    <property type="match status" value="1"/>
</dbReference>
<feature type="chain" id="PRO_0000141470" description="4-hydroxy-tetrahydrodipicolinate reductase">
    <location>
        <begin position="1"/>
        <end position="267"/>
    </location>
</feature>
<feature type="active site" description="Proton donor/acceptor" evidence="1">
    <location>
        <position position="155"/>
    </location>
</feature>
<feature type="active site" description="Proton donor" evidence="1">
    <location>
        <position position="159"/>
    </location>
</feature>
<feature type="binding site" evidence="1">
    <location>
        <begin position="8"/>
        <end position="13"/>
    </location>
    <ligand>
        <name>NAD(+)</name>
        <dbReference type="ChEBI" id="CHEBI:57540"/>
    </ligand>
</feature>
<feature type="binding site" evidence="1">
    <location>
        <position position="34"/>
    </location>
    <ligand>
        <name>NAD(+)</name>
        <dbReference type="ChEBI" id="CHEBI:57540"/>
    </ligand>
</feature>
<feature type="binding site" evidence="1">
    <location>
        <position position="35"/>
    </location>
    <ligand>
        <name>NADP(+)</name>
        <dbReference type="ChEBI" id="CHEBI:58349"/>
    </ligand>
</feature>
<feature type="binding site" evidence="1">
    <location>
        <begin position="98"/>
        <end position="100"/>
    </location>
    <ligand>
        <name>NAD(+)</name>
        <dbReference type="ChEBI" id="CHEBI:57540"/>
    </ligand>
</feature>
<feature type="binding site" evidence="1">
    <location>
        <begin position="122"/>
        <end position="125"/>
    </location>
    <ligand>
        <name>NAD(+)</name>
        <dbReference type="ChEBI" id="CHEBI:57540"/>
    </ligand>
</feature>
<feature type="binding site" evidence="1">
    <location>
        <position position="156"/>
    </location>
    <ligand>
        <name>(S)-2,3,4,5-tetrahydrodipicolinate</name>
        <dbReference type="ChEBI" id="CHEBI:16845"/>
    </ligand>
</feature>
<feature type="binding site" evidence="1">
    <location>
        <begin position="165"/>
        <end position="166"/>
    </location>
    <ligand>
        <name>(S)-2,3,4,5-tetrahydrodipicolinate</name>
        <dbReference type="ChEBI" id="CHEBI:16845"/>
    </ligand>
</feature>